<proteinExistence type="inferred from homology"/>
<organism>
    <name type="scientific">Geotalea daltonii (strain DSM 22248 / JCM 15807 / FRC-32)</name>
    <name type="common">Geobacter daltonii</name>
    <dbReference type="NCBI Taxonomy" id="316067"/>
    <lineage>
        <taxon>Bacteria</taxon>
        <taxon>Pseudomonadati</taxon>
        <taxon>Thermodesulfobacteriota</taxon>
        <taxon>Desulfuromonadia</taxon>
        <taxon>Geobacterales</taxon>
        <taxon>Geobacteraceae</taxon>
        <taxon>Geotalea</taxon>
    </lineage>
</organism>
<evidence type="ECO:0000255" key="1">
    <source>
        <dbReference type="HAMAP-Rule" id="MF_00366"/>
    </source>
</evidence>
<feature type="chain" id="PRO_1000194796" description="DNA-directed RNA polymerase subunit omega">
    <location>
        <begin position="1"/>
        <end position="69"/>
    </location>
</feature>
<name>RPOZ_GEODF</name>
<sequence length="69" mass="7773">MARVTVEDCLEKVDNRFLLVMLASKRVKQLFKGAKPLIDNRAANKNVVVSLREIAAGKVNFEISSRKSR</sequence>
<comment type="function">
    <text evidence="1">Promotes RNA polymerase assembly. Latches the N- and C-terminal regions of the beta' subunit thereby facilitating its interaction with the beta and alpha subunits.</text>
</comment>
<comment type="catalytic activity">
    <reaction evidence="1">
        <text>RNA(n) + a ribonucleoside 5'-triphosphate = RNA(n+1) + diphosphate</text>
        <dbReference type="Rhea" id="RHEA:21248"/>
        <dbReference type="Rhea" id="RHEA-COMP:14527"/>
        <dbReference type="Rhea" id="RHEA-COMP:17342"/>
        <dbReference type="ChEBI" id="CHEBI:33019"/>
        <dbReference type="ChEBI" id="CHEBI:61557"/>
        <dbReference type="ChEBI" id="CHEBI:140395"/>
        <dbReference type="EC" id="2.7.7.6"/>
    </reaction>
</comment>
<comment type="subunit">
    <text evidence="1">The RNAP catalytic core consists of 2 alpha, 1 beta, 1 beta' and 1 omega subunit. When a sigma factor is associated with the core the holoenzyme is formed, which can initiate transcription.</text>
</comment>
<comment type="similarity">
    <text evidence="1">Belongs to the RNA polymerase subunit omega family.</text>
</comment>
<keyword id="KW-0240">DNA-directed RNA polymerase</keyword>
<keyword id="KW-0548">Nucleotidyltransferase</keyword>
<keyword id="KW-1185">Reference proteome</keyword>
<keyword id="KW-0804">Transcription</keyword>
<keyword id="KW-0808">Transferase</keyword>
<protein>
    <recommendedName>
        <fullName evidence="1">DNA-directed RNA polymerase subunit omega</fullName>
        <shortName evidence="1">RNAP omega subunit</shortName>
        <ecNumber evidence="1">2.7.7.6</ecNumber>
    </recommendedName>
    <alternativeName>
        <fullName evidence="1">RNA polymerase omega subunit</fullName>
    </alternativeName>
    <alternativeName>
        <fullName evidence="1">Transcriptase subunit omega</fullName>
    </alternativeName>
</protein>
<dbReference type="EC" id="2.7.7.6" evidence="1"/>
<dbReference type="EMBL" id="CP001390">
    <property type="protein sequence ID" value="ACM20498.1"/>
    <property type="molecule type" value="Genomic_DNA"/>
</dbReference>
<dbReference type="RefSeq" id="WP_012647227.1">
    <property type="nucleotide sequence ID" value="NC_011979.1"/>
</dbReference>
<dbReference type="SMR" id="B9M902"/>
<dbReference type="STRING" id="316067.Geob_2144"/>
<dbReference type="KEGG" id="geo:Geob_2144"/>
<dbReference type="eggNOG" id="COG1758">
    <property type="taxonomic scope" value="Bacteria"/>
</dbReference>
<dbReference type="HOGENOM" id="CLU_125406_5_1_7"/>
<dbReference type="OrthoDB" id="9796300at2"/>
<dbReference type="Proteomes" id="UP000007721">
    <property type="component" value="Chromosome"/>
</dbReference>
<dbReference type="GO" id="GO:0000428">
    <property type="term" value="C:DNA-directed RNA polymerase complex"/>
    <property type="evidence" value="ECO:0007669"/>
    <property type="project" value="UniProtKB-KW"/>
</dbReference>
<dbReference type="GO" id="GO:0003677">
    <property type="term" value="F:DNA binding"/>
    <property type="evidence" value="ECO:0007669"/>
    <property type="project" value="UniProtKB-UniRule"/>
</dbReference>
<dbReference type="GO" id="GO:0003899">
    <property type="term" value="F:DNA-directed RNA polymerase activity"/>
    <property type="evidence" value="ECO:0007669"/>
    <property type="project" value="UniProtKB-UniRule"/>
</dbReference>
<dbReference type="GO" id="GO:0006351">
    <property type="term" value="P:DNA-templated transcription"/>
    <property type="evidence" value="ECO:0007669"/>
    <property type="project" value="UniProtKB-UniRule"/>
</dbReference>
<dbReference type="Gene3D" id="3.90.940.10">
    <property type="match status" value="1"/>
</dbReference>
<dbReference type="HAMAP" id="MF_00366">
    <property type="entry name" value="RNApol_bact_RpoZ"/>
    <property type="match status" value="1"/>
</dbReference>
<dbReference type="InterPro" id="IPR003716">
    <property type="entry name" value="DNA-dir_RNA_pol_omega"/>
</dbReference>
<dbReference type="InterPro" id="IPR006110">
    <property type="entry name" value="Pol_omega/Rpo6/RPB6"/>
</dbReference>
<dbReference type="InterPro" id="IPR036161">
    <property type="entry name" value="RPB6/omega-like_sf"/>
</dbReference>
<dbReference type="NCBIfam" id="TIGR00690">
    <property type="entry name" value="rpoZ"/>
    <property type="match status" value="1"/>
</dbReference>
<dbReference type="PANTHER" id="PTHR34476">
    <property type="entry name" value="DNA-DIRECTED RNA POLYMERASE SUBUNIT OMEGA"/>
    <property type="match status" value="1"/>
</dbReference>
<dbReference type="PANTHER" id="PTHR34476:SF1">
    <property type="entry name" value="DNA-DIRECTED RNA POLYMERASE SUBUNIT OMEGA"/>
    <property type="match status" value="1"/>
</dbReference>
<dbReference type="Pfam" id="PF01192">
    <property type="entry name" value="RNA_pol_Rpb6"/>
    <property type="match status" value="1"/>
</dbReference>
<dbReference type="SMART" id="SM01409">
    <property type="entry name" value="RNA_pol_Rpb6"/>
    <property type="match status" value="1"/>
</dbReference>
<dbReference type="SUPFAM" id="SSF63562">
    <property type="entry name" value="RPB6/omega subunit-like"/>
    <property type="match status" value="1"/>
</dbReference>
<accession>B9M902</accession>
<gene>
    <name evidence="1" type="primary">rpoZ</name>
    <name type="ordered locus">Geob_2144</name>
</gene>
<reference key="1">
    <citation type="submission" date="2009-01" db="EMBL/GenBank/DDBJ databases">
        <title>Complete sequence of Geobacter sp. FRC-32.</title>
        <authorList>
            <consortium name="US DOE Joint Genome Institute"/>
            <person name="Lucas S."/>
            <person name="Copeland A."/>
            <person name="Lapidus A."/>
            <person name="Glavina del Rio T."/>
            <person name="Dalin E."/>
            <person name="Tice H."/>
            <person name="Bruce D."/>
            <person name="Goodwin L."/>
            <person name="Pitluck S."/>
            <person name="Saunders E."/>
            <person name="Brettin T."/>
            <person name="Detter J.C."/>
            <person name="Han C."/>
            <person name="Larimer F."/>
            <person name="Land M."/>
            <person name="Hauser L."/>
            <person name="Kyrpides N."/>
            <person name="Ovchinnikova G."/>
            <person name="Kostka J."/>
            <person name="Richardson P."/>
        </authorList>
    </citation>
    <scope>NUCLEOTIDE SEQUENCE [LARGE SCALE GENOMIC DNA]</scope>
    <source>
        <strain>DSM 22248 / JCM 15807 / FRC-32</strain>
    </source>
</reference>